<keyword id="KW-0963">Cytoplasm</keyword>
<keyword id="KW-0206">Cytoskeleton</keyword>
<protein>
    <recommendedName>
        <fullName evidence="2">Thor profilin</fullName>
    </recommendedName>
</protein>
<organism>
    <name type="scientific">Thorarchaeota archaeon (strain AB_25)</name>
    <dbReference type="NCBI Taxonomy" id="1837170"/>
    <lineage>
        <taxon>Archaea</taxon>
        <taxon>Promethearchaeati</taxon>
        <taxon>Candidatus Thorarchaeota</taxon>
    </lineage>
</organism>
<feature type="chain" id="PRO_0000450554" description="Thor profilin">
    <location>
        <begin position="1"/>
        <end position="128"/>
    </location>
</feature>
<proteinExistence type="evidence at protein level"/>
<accession>A0A1Q9PA05</accession>
<reference key="1">
    <citation type="journal article" date="2017" name="Nature">
        <title>Asgard archaea illuminate the origin of eukaryotic cellular complexity.</title>
        <authorList>
            <person name="Zaremba-Niedzwiedzka K."/>
            <person name="Caceres E.F."/>
            <person name="Saw J.H."/>
            <person name="Backstrom D."/>
            <person name="Juzokaite L."/>
            <person name="Vancaester E."/>
            <person name="Seitz K.W."/>
            <person name="Anantharaman K."/>
            <person name="Starnawski P."/>
            <person name="Kjeldsen K.U."/>
            <person name="Stott M.B."/>
            <person name="Nunoura T."/>
            <person name="Banfield J.F."/>
            <person name="Schramm A."/>
            <person name="Baker B.J."/>
            <person name="Spang A."/>
            <person name="Ettema T.J.G."/>
        </authorList>
    </citation>
    <scope>NUCLEOTIDE SEQUENCE [LARGE SCALE GENOMIC DNA]</scope>
    <source>
        <strain>AB_25</strain>
    </source>
</reference>
<reference key="2">
    <citation type="journal article" date="2018" name="Nature">
        <title>Genomes of Asgard archaea encode profilins that regulate actin.</title>
        <authorList>
            <person name="Akil C."/>
            <person name="Robinson R.C."/>
        </authorList>
    </citation>
    <scope>POSSIBLE LACK OF FUNCTION AS A PROFILIN</scope>
</reference>
<dbReference type="EMBL" id="MEHG01000010">
    <property type="protein sequence ID" value="OLS31208.1"/>
    <property type="molecule type" value="Genomic_DNA"/>
</dbReference>
<dbReference type="SMR" id="A0A1Q9PA05"/>
<dbReference type="STRING" id="1837170.ThorAB25_04690"/>
<dbReference type="Proteomes" id="UP000185561">
    <property type="component" value="Unassembled WGS sequence"/>
</dbReference>
<dbReference type="GO" id="GO:0005737">
    <property type="term" value="C:cytoplasm"/>
    <property type="evidence" value="ECO:0007669"/>
    <property type="project" value="UniProtKB-KW"/>
</dbReference>
<dbReference type="GO" id="GO:0005856">
    <property type="term" value="C:cytoskeleton"/>
    <property type="evidence" value="ECO:0007669"/>
    <property type="project" value="UniProtKB-SubCell"/>
</dbReference>
<dbReference type="GO" id="GO:0003779">
    <property type="term" value="F:actin binding"/>
    <property type="evidence" value="ECO:0007669"/>
    <property type="project" value="InterPro"/>
</dbReference>
<dbReference type="Gene3D" id="3.30.450.30">
    <property type="entry name" value="Dynein light chain 2a, cytoplasmic"/>
    <property type="match status" value="1"/>
</dbReference>
<dbReference type="InterPro" id="IPR048278">
    <property type="entry name" value="PFN"/>
</dbReference>
<dbReference type="InterPro" id="IPR036140">
    <property type="entry name" value="PFN_sf"/>
</dbReference>
<dbReference type="Pfam" id="PF00235">
    <property type="entry name" value="Profilin"/>
    <property type="match status" value="1"/>
</dbReference>
<dbReference type="SUPFAM" id="SSF55770">
    <property type="entry name" value="Profilin (actin-binding protein)"/>
    <property type="match status" value="1"/>
</dbReference>
<sequence length="128" mass="13892">MSDPVMDAYTQAYNSSGNMVQAFGVISESGQVLWQSNNWDLTADASTLMSAVKSRASSVIQNQVKYSTMRSTPESLVARNVQGSGILILTKIDTTSDRWVVAWADAQAQPDGVYVDVDRAAKTLRGKI</sequence>
<comment type="function">
    <text evidence="1">Has no profilin activity against rabbit actin.</text>
</comment>
<comment type="subcellular location">
    <subcellularLocation>
        <location evidence="4">Cytoplasm</location>
        <location evidence="4">Cytoskeleton</location>
    </subcellularLocation>
</comment>
<comment type="similarity">
    <text evidence="3">Belongs to the Asgard profilin family.</text>
</comment>
<name>PROF_THOAA</name>
<gene>
    <name type="ORF">ThorAB25_04690</name>
</gene>
<evidence type="ECO:0000269" key="1">
    <source>
    </source>
</evidence>
<evidence type="ECO:0000303" key="2">
    <source>
    </source>
</evidence>
<evidence type="ECO:0000305" key="3"/>
<evidence type="ECO:0000305" key="4">
    <source>
    </source>
</evidence>